<dbReference type="EC" id="4.2.1.33" evidence="1"/>
<dbReference type="EMBL" id="CU928158">
    <property type="protein sequence ID" value="CAQ87679.1"/>
    <property type="molecule type" value="Genomic_DNA"/>
</dbReference>
<dbReference type="RefSeq" id="WP_001140645.1">
    <property type="nucleotide sequence ID" value="NC_011740.1"/>
</dbReference>
<dbReference type="SMR" id="B7LWE0"/>
<dbReference type="GeneID" id="75058819"/>
<dbReference type="KEGG" id="efe:EFER_0094"/>
<dbReference type="HOGENOM" id="CLU_006714_3_4_6"/>
<dbReference type="OrthoDB" id="9802769at2"/>
<dbReference type="UniPathway" id="UPA00048">
    <property type="reaction ID" value="UER00071"/>
</dbReference>
<dbReference type="Proteomes" id="UP000000745">
    <property type="component" value="Chromosome"/>
</dbReference>
<dbReference type="GO" id="GO:0003861">
    <property type="term" value="F:3-isopropylmalate dehydratase activity"/>
    <property type="evidence" value="ECO:0007669"/>
    <property type="project" value="UniProtKB-UniRule"/>
</dbReference>
<dbReference type="GO" id="GO:0051539">
    <property type="term" value="F:4 iron, 4 sulfur cluster binding"/>
    <property type="evidence" value="ECO:0007669"/>
    <property type="project" value="UniProtKB-KW"/>
</dbReference>
<dbReference type="GO" id="GO:0046872">
    <property type="term" value="F:metal ion binding"/>
    <property type="evidence" value="ECO:0007669"/>
    <property type="project" value="UniProtKB-KW"/>
</dbReference>
<dbReference type="GO" id="GO:0009098">
    <property type="term" value="P:L-leucine biosynthetic process"/>
    <property type="evidence" value="ECO:0007669"/>
    <property type="project" value="UniProtKB-UniRule"/>
</dbReference>
<dbReference type="CDD" id="cd01583">
    <property type="entry name" value="IPMI"/>
    <property type="match status" value="1"/>
</dbReference>
<dbReference type="FunFam" id="3.30.499.10:FF:000006">
    <property type="entry name" value="3-isopropylmalate dehydratase large subunit"/>
    <property type="match status" value="1"/>
</dbReference>
<dbReference type="FunFam" id="3.30.499.10:FF:000007">
    <property type="entry name" value="3-isopropylmalate dehydratase large subunit"/>
    <property type="match status" value="1"/>
</dbReference>
<dbReference type="Gene3D" id="3.30.499.10">
    <property type="entry name" value="Aconitase, domain 3"/>
    <property type="match status" value="2"/>
</dbReference>
<dbReference type="HAMAP" id="MF_01026">
    <property type="entry name" value="LeuC_type1"/>
    <property type="match status" value="1"/>
</dbReference>
<dbReference type="InterPro" id="IPR004430">
    <property type="entry name" value="3-IsopropMal_deHydase_lsu"/>
</dbReference>
<dbReference type="InterPro" id="IPR015931">
    <property type="entry name" value="Acnase/IPM_dHydase_lsu_aba_1/3"/>
</dbReference>
<dbReference type="InterPro" id="IPR001030">
    <property type="entry name" value="Acoase/IPM_deHydtase_lsu_aba"/>
</dbReference>
<dbReference type="InterPro" id="IPR018136">
    <property type="entry name" value="Aconitase_4Fe-4S_BS"/>
</dbReference>
<dbReference type="InterPro" id="IPR036008">
    <property type="entry name" value="Aconitase_4Fe-4S_dom"/>
</dbReference>
<dbReference type="InterPro" id="IPR050067">
    <property type="entry name" value="IPM_dehydratase_rel_enz"/>
</dbReference>
<dbReference type="InterPro" id="IPR033941">
    <property type="entry name" value="IPMI_cat"/>
</dbReference>
<dbReference type="NCBIfam" id="TIGR00170">
    <property type="entry name" value="leuC"/>
    <property type="match status" value="1"/>
</dbReference>
<dbReference type="NCBIfam" id="NF004016">
    <property type="entry name" value="PRK05478.1"/>
    <property type="match status" value="1"/>
</dbReference>
<dbReference type="NCBIfam" id="NF009116">
    <property type="entry name" value="PRK12466.1"/>
    <property type="match status" value="1"/>
</dbReference>
<dbReference type="PANTHER" id="PTHR43822:SF9">
    <property type="entry name" value="3-ISOPROPYLMALATE DEHYDRATASE"/>
    <property type="match status" value="1"/>
</dbReference>
<dbReference type="PANTHER" id="PTHR43822">
    <property type="entry name" value="HOMOACONITASE, MITOCHONDRIAL-RELATED"/>
    <property type="match status" value="1"/>
</dbReference>
<dbReference type="Pfam" id="PF00330">
    <property type="entry name" value="Aconitase"/>
    <property type="match status" value="1"/>
</dbReference>
<dbReference type="PRINTS" id="PR00415">
    <property type="entry name" value="ACONITASE"/>
</dbReference>
<dbReference type="SUPFAM" id="SSF53732">
    <property type="entry name" value="Aconitase iron-sulfur domain"/>
    <property type="match status" value="1"/>
</dbReference>
<dbReference type="PROSITE" id="PS00450">
    <property type="entry name" value="ACONITASE_1"/>
    <property type="match status" value="1"/>
</dbReference>
<dbReference type="PROSITE" id="PS01244">
    <property type="entry name" value="ACONITASE_2"/>
    <property type="match status" value="1"/>
</dbReference>
<proteinExistence type="inferred from homology"/>
<reference key="1">
    <citation type="journal article" date="2009" name="PLoS Genet.">
        <title>Organised genome dynamics in the Escherichia coli species results in highly diverse adaptive paths.</title>
        <authorList>
            <person name="Touchon M."/>
            <person name="Hoede C."/>
            <person name="Tenaillon O."/>
            <person name="Barbe V."/>
            <person name="Baeriswyl S."/>
            <person name="Bidet P."/>
            <person name="Bingen E."/>
            <person name="Bonacorsi S."/>
            <person name="Bouchier C."/>
            <person name="Bouvet O."/>
            <person name="Calteau A."/>
            <person name="Chiapello H."/>
            <person name="Clermont O."/>
            <person name="Cruveiller S."/>
            <person name="Danchin A."/>
            <person name="Diard M."/>
            <person name="Dossat C."/>
            <person name="Karoui M.E."/>
            <person name="Frapy E."/>
            <person name="Garry L."/>
            <person name="Ghigo J.M."/>
            <person name="Gilles A.M."/>
            <person name="Johnson J."/>
            <person name="Le Bouguenec C."/>
            <person name="Lescat M."/>
            <person name="Mangenot S."/>
            <person name="Martinez-Jehanne V."/>
            <person name="Matic I."/>
            <person name="Nassif X."/>
            <person name="Oztas S."/>
            <person name="Petit M.A."/>
            <person name="Pichon C."/>
            <person name="Rouy Z."/>
            <person name="Ruf C.S."/>
            <person name="Schneider D."/>
            <person name="Tourret J."/>
            <person name="Vacherie B."/>
            <person name="Vallenet D."/>
            <person name="Medigue C."/>
            <person name="Rocha E.P.C."/>
            <person name="Denamur E."/>
        </authorList>
    </citation>
    <scope>NUCLEOTIDE SEQUENCE [LARGE SCALE GENOMIC DNA]</scope>
    <source>
        <strain>ATCC 35469 / DSM 13698 / BCRC 15582 / CCUG 18766 / IAM 14443 / JCM 21226 / LMG 7866 / NBRC 102419 / NCTC 12128 / CDC 0568-73</strain>
    </source>
</reference>
<evidence type="ECO:0000255" key="1">
    <source>
        <dbReference type="HAMAP-Rule" id="MF_01026"/>
    </source>
</evidence>
<keyword id="KW-0004">4Fe-4S</keyword>
<keyword id="KW-0028">Amino-acid biosynthesis</keyword>
<keyword id="KW-0100">Branched-chain amino acid biosynthesis</keyword>
<keyword id="KW-0408">Iron</keyword>
<keyword id="KW-0411">Iron-sulfur</keyword>
<keyword id="KW-0432">Leucine biosynthesis</keyword>
<keyword id="KW-0456">Lyase</keyword>
<keyword id="KW-0479">Metal-binding</keyword>
<comment type="function">
    <text evidence="1">Catalyzes the isomerization between 2-isopropylmalate and 3-isopropylmalate, via the formation of 2-isopropylmaleate.</text>
</comment>
<comment type="catalytic activity">
    <reaction evidence="1">
        <text>(2R,3S)-3-isopropylmalate = (2S)-2-isopropylmalate</text>
        <dbReference type="Rhea" id="RHEA:32287"/>
        <dbReference type="ChEBI" id="CHEBI:1178"/>
        <dbReference type="ChEBI" id="CHEBI:35121"/>
        <dbReference type="EC" id="4.2.1.33"/>
    </reaction>
</comment>
<comment type="cofactor">
    <cofactor evidence="1">
        <name>[4Fe-4S] cluster</name>
        <dbReference type="ChEBI" id="CHEBI:49883"/>
    </cofactor>
    <text evidence="1">Binds 1 [4Fe-4S] cluster per subunit.</text>
</comment>
<comment type="pathway">
    <text evidence="1">Amino-acid biosynthesis; L-leucine biosynthesis; L-leucine from 3-methyl-2-oxobutanoate: step 2/4.</text>
</comment>
<comment type="subunit">
    <text evidence="1">Heterodimer of LeuC and LeuD.</text>
</comment>
<comment type="similarity">
    <text evidence="1">Belongs to the aconitase/IPM isomerase family. LeuC type 1 subfamily.</text>
</comment>
<sequence>MAKTLYEKLFDAHVVYEAENETPLLYIDRHLVHEVTSPQAFDGLRAHGRPVRQPGKTFATMDHNVSTQTKDINACGEMARIQMQELIKNCKEFGVELYDLNHPYQGIVHVMGPEQGVTLPGMTIVCGDSHTATHGAFGALAFGIGTSEVEHVLATQTLKQGRAKTMKIEVQGKAAPGITAKDIVLAIIGKTGSAGGTGHVVEFCGEAIRDLSMEGRMTLCNMAIEMGAKAGLVAPDETTFNYVKGRLHAPKGKDFDDAVAYWKTLQTDEGATFDTVVTLQAEEIAPQVTWGTNPGQVISVNDNIPDPASFADPVERASAEKALAYMGLKPGIPLTEVAIDKVFIGSCTNSRIEDLRAAAEIAKGRKVAPGVQALVVPGSGPVKAQAEAEGLDKIFIEAGFEWRLPGCSMCLAMNNDRLNPGERCASTSNRNFEGRQGRGGRTHLVSPAMAAAAAVTGHFADIRNIK</sequence>
<feature type="chain" id="PRO_1000135686" description="3-isopropylmalate dehydratase large subunit">
    <location>
        <begin position="1"/>
        <end position="466"/>
    </location>
</feature>
<feature type="binding site" evidence="1">
    <location>
        <position position="347"/>
    </location>
    <ligand>
        <name>[4Fe-4S] cluster</name>
        <dbReference type="ChEBI" id="CHEBI:49883"/>
    </ligand>
</feature>
<feature type="binding site" evidence="1">
    <location>
        <position position="407"/>
    </location>
    <ligand>
        <name>[4Fe-4S] cluster</name>
        <dbReference type="ChEBI" id="CHEBI:49883"/>
    </ligand>
</feature>
<feature type="binding site" evidence="1">
    <location>
        <position position="410"/>
    </location>
    <ligand>
        <name>[4Fe-4S] cluster</name>
        <dbReference type="ChEBI" id="CHEBI:49883"/>
    </ligand>
</feature>
<organism>
    <name type="scientific">Escherichia fergusonii (strain ATCC 35469 / DSM 13698 / CCUG 18766 / IAM 14443 / JCM 21226 / LMG 7866 / NBRC 102419 / NCTC 12128 / CDC 0568-73)</name>
    <dbReference type="NCBI Taxonomy" id="585054"/>
    <lineage>
        <taxon>Bacteria</taxon>
        <taxon>Pseudomonadati</taxon>
        <taxon>Pseudomonadota</taxon>
        <taxon>Gammaproteobacteria</taxon>
        <taxon>Enterobacterales</taxon>
        <taxon>Enterobacteriaceae</taxon>
        <taxon>Escherichia</taxon>
    </lineage>
</organism>
<protein>
    <recommendedName>
        <fullName evidence="1">3-isopropylmalate dehydratase large subunit</fullName>
        <ecNumber evidence="1">4.2.1.33</ecNumber>
    </recommendedName>
    <alternativeName>
        <fullName evidence="1">Alpha-IPM isomerase</fullName>
        <shortName evidence="1">IPMI</shortName>
    </alternativeName>
    <alternativeName>
        <fullName evidence="1">Isopropylmalate isomerase</fullName>
    </alternativeName>
</protein>
<gene>
    <name evidence="1" type="primary">leuC</name>
    <name type="ordered locus">EFER_0094</name>
</gene>
<accession>B7LWE0</accession>
<name>LEUC_ESCF3</name>